<accession>Q9ZQX7</accession>
<accession>Q5XV88</accession>
<evidence type="ECO:0000255" key="1"/>
<evidence type="ECO:0000303" key="2">
    <source>
    </source>
</evidence>
<evidence type="ECO:0000305" key="3"/>
<evidence type="ECO:0000312" key="4">
    <source>
        <dbReference type="Araport" id="AT4G02690"/>
    </source>
</evidence>
<evidence type="ECO:0000312" key="5">
    <source>
        <dbReference type="EMBL" id="AAC78271.1"/>
    </source>
</evidence>
<comment type="subcellular location">
    <subcellularLocation>
        <location evidence="1">Membrane</location>
        <topology evidence="1">Multi-pass membrane protein</topology>
    </subcellularLocation>
</comment>
<comment type="alternative products">
    <event type="alternative splicing"/>
    <isoform>
        <id>Q9ZQX7-1</id>
        <name>1</name>
        <sequence type="displayed"/>
    </isoform>
    <isoform>
        <id>Q9ZQX7-2</id>
        <name>2</name>
        <sequence type="described" ref="VSP_059078 VSP_059079"/>
    </isoform>
</comment>
<comment type="similarity">
    <text evidence="3">Belongs to the BI1 family.</text>
</comment>
<keyword id="KW-0025">Alternative splicing</keyword>
<keyword id="KW-0472">Membrane</keyword>
<keyword id="KW-1185">Reference proteome</keyword>
<keyword id="KW-0812">Transmembrane</keyword>
<keyword id="KW-1133">Transmembrane helix</keyword>
<organism>
    <name type="scientific">Arabidopsis thaliana</name>
    <name type="common">Mouse-ear cress</name>
    <dbReference type="NCBI Taxonomy" id="3702"/>
    <lineage>
        <taxon>Eukaryota</taxon>
        <taxon>Viridiplantae</taxon>
        <taxon>Streptophyta</taxon>
        <taxon>Embryophyta</taxon>
        <taxon>Tracheophyta</taxon>
        <taxon>Spermatophyta</taxon>
        <taxon>Magnoliopsida</taxon>
        <taxon>eudicotyledons</taxon>
        <taxon>Gunneridae</taxon>
        <taxon>Pentapetalae</taxon>
        <taxon>rosids</taxon>
        <taxon>malvids</taxon>
        <taxon>Brassicales</taxon>
        <taxon>Brassicaceae</taxon>
        <taxon>Camelineae</taxon>
        <taxon>Arabidopsis</taxon>
    </lineage>
</organism>
<sequence length="248" mass="28221">MYQWNLPYRKDDVETGVSSRRPLLYPAMHENPELRWGFIRKVYSIIAFQLLATVAVAATVVTVRPIALFFATTGLGLALYIVIIITPLIVLCPLYYYHQKHPVNYLLLGIFTLALAFVVGLTCAFTNGKVILESVILTSVVVLSLTLYTFWAARKGYDFNFLGPFLFGALTVLIFFALIQILFPLGRVSVMIYGCLVSIIFCGYIVYDTDNLIKRHTYDEYIWAAVSLYLDIINLFLYLLTVLRALQR</sequence>
<gene>
    <name evidence="2" type="primary">LFG3</name>
    <name evidence="4" type="ordered locus">At4g02690</name>
    <name evidence="5" type="ORF">T10P11.23</name>
</gene>
<proteinExistence type="evidence at transcript level"/>
<reference key="1">
    <citation type="journal article" date="1999" name="Nature">
        <title>Sequence and analysis of chromosome 4 of the plant Arabidopsis thaliana.</title>
        <authorList>
            <person name="Mayer K.F.X."/>
            <person name="Schueller C."/>
            <person name="Wambutt R."/>
            <person name="Murphy G."/>
            <person name="Volckaert G."/>
            <person name="Pohl T."/>
            <person name="Duesterhoeft A."/>
            <person name="Stiekema W."/>
            <person name="Entian K.-D."/>
            <person name="Terryn N."/>
            <person name="Harris B."/>
            <person name="Ansorge W."/>
            <person name="Brandt P."/>
            <person name="Grivell L.A."/>
            <person name="Rieger M."/>
            <person name="Weichselgartner M."/>
            <person name="de Simone V."/>
            <person name="Obermaier B."/>
            <person name="Mache R."/>
            <person name="Mueller M."/>
            <person name="Kreis M."/>
            <person name="Delseny M."/>
            <person name="Puigdomenech P."/>
            <person name="Watson M."/>
            <person name="Schmidtheini T."/>
            <person name="Reichert B."/>
            <person name="Portetelle D."/>
            <person name="Perez-Alonso M."/>
            <person name="Boutry M."/>
            <person name="Bancroft I."/>
            <person name="Vos P."/>
            <person name="Hoheisel J."/>
            <person name="Zimmermann W."/>
            <person name="Wedler H."/>
            <person name="Ridley P."/>
            <person name="Langham S.-A."/>
            <person name="McCullagh B."/>
            <person name="Bilham L."/>
            <person name="Robben J."/>
            <person name="van der Schueren J."/>
            <person name="Grymonprez B."/>
            <person name="Chuang Y.-J."/>
            <person name="Vandenbussche F."/>
            <person name="Braeken M."/>
            <person name="Weltjens I."/>
            <person name="Voet M."/>
            <person name="Bastiaens I."/>
            <person name="Aert R."/>
            <person name="Defoor E."/>
            <person name="Weitzenegger T."/>
            <person name="Bothe G."/>
            <person name="Ramsperger U."/>
            <person name="Hilbert H."/>
            <person name="Braun M."/>
            <person name="Holzer E."/>
            <person name="Brandt A."/>
            <person name="Peters S."/>
            <person name="van Staveren M."/>
            <person name="Dirkse W."/>
            <person name="Mooijman P."/>
            <person name="Klein Lankhorst R."/>
            <person name="Rose M."/>
            <person name="Hauf J."/>
            <person name="Koetter P."/>
            <person name="Berneiser S."/>
            <person name="Hempel S."/>
            <person name="Feldpausch M."/>
            <person name="Lamberth S."/>
            <person name="Van den Daele H."/>
            <person name="De Keyser A."/>
            <person name="Buysshaert C."/>
            <person name="Gielen J."/>
            <person name="Villarroel R."/>
            <person name="De Clercq R."/>
            <person name="van Montagu M."/>
            <person name="Rogers J."/>
            <person name="Cronin A."/>
            <person name="Quail M.A."/>
            <person name="Bray-Allen S."/>
            <person name="Clark L."/>
            <person name="Doggett J."/>
            <person name="Hall S."/>
            <person name="Kay M."/>
            <person name="Lennard N."/>
            <person name="McLay K."/>
            <person name="Mayes R."/>
            <person name="Pettett A."/>
            <person name="Rajandream M.A."/>
            <person name="Lyne M."/>
            <person name="Benes V."/>
            <person name="Rechmann S."/>
            <person name="Borkova D."/>
            <person name="Bloecker H."/>
            <person name="Scharfe M."/>
            <person name="Grimm M."/>
            <person name="Loehnert T.-H."/>
            <person name="Dose S."/>
            <person name="de Haan M."/>
            <person name="Maarse A.C."/>
            <person name="Schaefer M."/>
            <person name="Mueller-Auer S."/>
            <person name="Gabel C."/>
            <person name="Fuchs M."/>
            <person name="Fartmann B."/>
            <person name="Granderath K."/>
            <person name="Dauner D."/>
            <person name="Herzl A."/>
            <person name="Neumann S."/>
            <person name="Argiriou A."/>
            <person name="Vitale D."/>
            <person name="Liguori R."/>
            <person name="Piravandi E."/>
            <person name="Massenet O."/>
            <person name="Quigley F."/>
            <person name="Clabauld G."/>
            <person name="Muendlein A."/>
            <person name="Felber R."/>
            <person name="Schnabl S."/>
            <person name="Hiller R."/>
            <person name="Schmidt W."/>
            <person name="Lecharny A."/>
            <person name="Aubourg S."/>
            <person name="Chefdor F."/>
            <person name="Cooke R."/>
            <person name="Berger C."/>
            <person name="Monfort A."/>
            <person name="Casacuberta E."/>
            <person name="Gibbons T."/>
            <person name="Weber N."/>
            <person name="Vandenbol M."/>
            <person name="Bargues M."/>
            <person name="Terol J."/>
            <person name="Torres A."/>
            <person name="Perez-Perez A."/>
            <person name="Purnelle B."/>
            <person name="Bent E."/>
            <person name="Johnson S."/>
            <person name="Tacon D."/>
            <person name="Jesse T."/>
            <person name="Heijnen L."/>
            <person name="Schwarz S."/>
            <person name="Scholler P."/>
            <person name="Heber S."/>
            <person name="Francs P."/>
            <person name="Bielke C."/>
            <person name="Frishman D."/>
            <person name="Haase D."/>
            <person name="Lemcke K."/>
            <person name="Mewes H.-W."/>
            <person name="Stocker S."/>
            <person name="Zaccaria P."/>
            <person name="Bevan M."/>
            <person name="Wilson R.K."/>
            <person name="de la Bastide M."/>
            <person name="Habermann K."/>
            <person name="Parnell L."/>
            <person name="Dedhia N."/>
            <person name="Gnoj L."/>
            <person name="Schutz K."/>
            <person name="Huang E."/>
            <person name="Spiegel L."/>
            <person name="Sekhon M."/>
            <person name="Murray J."/>
            <person name="Sheet P."/>
            <person name="Cordes M."/>
            <person name="Abu-Threideh J."/>
            <person name="Stoneking T."/>
            <person name="Kalicki J."/>
            <person name="Graves T."/>
            <person name="Harmon G."/>
            <person name="Edwards J."/>
            <person name="Latreille P."/>
            <person name="Courtney L."/>
            <person name="Cloud J."/>
            <person name="Abbott A."/>
            <person name="Scott K."/>
            <person name="Johnson D."/>
            <person name="Minx P."/>
            <person name="Bentley D."/>
            <person name="Fulton B."/>
            <person name="Miller N."/>
            <person name="Greco T."/>
            <person name="Kemp K."/>
            <person name="Kramer J."/>
            <person name="Fulton L."/>
            <person name="Mardis E."/>
            <person name="Dante M."/>
            <person name="Pepin K."/>
            <person name="Hillier L.W."/>
            <person name="Nelson J."/>
            <person name="Spieth J."/>
            <person name="Ryan E."/>
            <person name="Andrews S."/>
            <person name="Geisel C."/>
            <person name="Layman D."/>
            <person name="Du H."/>
            <person name="Ali J."/>
            <person name="Berghoff A."/>
            <person name="Jones K."/>
            <person name="Drone K."/>
            <person name="Cotton M."/>
            <person name="Joshu C."/>
            <person name="Antonoiu B."/>
            <person name="Zidanic M."/>
            <person name="Strong C."/>
            <person name="Sun H."/>
            <person name="Lamar B."/>
            <person name="Yordan C."/>
            <person name="Ma P."/>
            <person name="Zhong J."/>
            <person name="Preston R."/>
            <person name="Vil D."/>
            <person name="Shekher M."/>
            <person name="Matero A."/>
            <person name="Shah R."/>
            <person name="Swaby I.K."/>
            <person name="O'Shaughnessy A."/>
            <person name="Rodriguez M."/>
            <person name="Hoffman J."/>
            <person name="Till S."/>
            <person name="Granat S."/>
            <person name="Shohdy N."/>
            <person name="Hasegawa A."/>
            <person name="Hameed A."/>
            <person name="Lodhi M."/>
            <person name="Johnson A."/>
            <person name="Chen E."/>
            <person name="Marra M.A."/>
            <person name="Martienssen R."/>
            <person name="McCombie W.R."/>
        </authorList>
    </citation>
    <scope>NUCLEOTIDE SEQUENCE [LARGE SCALE GENOMIC DNA]</scope>
    <source>
        <strain>cv. Columbia</strain>
    </source>
</reference>
<reference key="2">
    <citation type="journal article" date="2017" name="Plant J.">
        <title>Araport11: a complete reannotation of the Arabidopsis thaliana reference genome.</title>
        <authorList>
            <person name="Cheng C.Y."/>
            <person name="Krishnakumar V."/>
            <person name="Chan A.P."/>
            <person name="Thibaud-Nissen F."/>
            <person name="Schobel S."/>
            <person name="Town C.D."/>
        </authorList>
    </citation>
    <scope>GENOME REANNOTATION</scope>
    <source>
        <strain>cv. Columbia</strain>
    </source>
</reference>
<reference key="3">
    <citation type="journal article" date="2005" name="Plant Physiol.">
        <title>Analysis of the cDNAs of hypothetical genes on Arabidopsis chromosome 2 reveals numerous transcript variants.</title>
        <authorList>
            <person name="Xiao Y.-L."/>
            <person name="Smith S.R."/>
            <person name="Ishmael N."/>
            <person name="Redman J.C."/>
            <person name="Kumar N."/>
            <person name="Monaghan E.L."/>
            <person name="Ayele M."/>
            <person name="Haas B.J."/>
            <person name="Wu H.C."/>
            <person name="Town C.D."/>
        </authorList>
    </citation>
    <scope>NUCLEOTIDE SEQUENCE [LARGE SCALE MRNA] (ISOFORMS 1 AND 2)</scope>
    <source>
        <strain>cv. Columbia</strain>
    </source>
</reference>
<reference key="4">
    <citation type="submission" date="2005-02" db="EMBL/GenBank/DDBJ databases">
        <authorList>
            <person name="Underwood B.A."/>
            <person name="Xiao Y.-L."/>
            <person name="Moskal W.A. Jr."/>
            <person name="Monaghan E.L."/>
            <person name="Wang W."/>
            <person name="Redman J.C."/>
            <person name="Wu H.C."/>
            <person name="Utterback T."/>
            <person name="Town C.D."/>
        </authorList>
    </citation>
    <scope>NUCLEOTIDE SEQUENCE [LARGE SCALE MRNA] (ISOFORM 1)</scope>
    <source>
        <strain>cv. Columbia</strain>
    </source>
</reference>
<reference key="5">
    <citation type="journal article" date="2006" name="Genome Biol.">
        <title>Mining the Arabidopsis thaliana genome for highly-divergent seven transmembrane receptors.</title>
        <authorList>
            <person name="Moriyama E.N."/>
            <person name="Strope P.K."/>
            <person name="Opiyo S.O."/>
            <person name="Chen Z."/>
            <person name="Jones A.M."/>
        </authorList>
    </citation>
    <scope>GENE FAMILY</scope>
</reference>
<reference key="6">
    <citation type="journal article" date="2009" name="Biosci. Biotechnol. Biochem.">
        <title>Chemical genetics reveal the novel transmembrane protein BIL4, which mediates plant cell elongation in brassinosteroid signaling.</title>
        <authorList>
            <person name="Yamagami A."/>
            <person name="Nakazawa M."/>
            <person name="Matsui M."/>
            <person name="Tujimoto M."/>
            <person name="Sakuta M."/>
            <person name="Asami T."/>
            <person name="Nakano T."/>
        </authorList>
    </citation>
    <scope>GENE FAMILY</scope>
</reference>
<reference key="7">
    <citation type="journal article" date="2013" name="J. Exp. Bot.">
        <title>LIFEGUARD proteins support plant colonization by biotrophic powdery mildew fungi.</title>
        <authorList>
            <person name="Weis C."/>
            <person name="Hueckelhoven R."/>
            <person name="Eichmann R."/>
        </authorList>
    </citation>
    <scope>GENE FAMILY</scope>
    <scope>NOMENCLATURE</scope>
    <source>
        <strain>cv. Columbia</strain>
    </source>
</reference>
<protein>
    <recommendedName>
        <fullName evidence="2">Protein LIFEGUARD 3</fullName>
        <shortName evidence="2">AtLFG3</shortName>
    </recommendedName>
</protein>
<feature type="chain" id="PRO_0000441631" description="Protein LIFEGUARD 3">
    <location>
        <begin position="1"/>
        <end position="248"/>
    </location>
</feature>
<feature type="transmembrane region" description="Helical" evidence="1">
    <location>
        <begin position="42"/>
        <end position="62"/>
    </location>
</feature>
<feature type="transmembrane region" description="Helical" evidence="1">
    <location>
        <begin position="74"/>
        <end position="94"/>
    </location>
</feature>
<feature type="transmembrane region" description="Helical" evidence="1">
    <location>
        <begin position="105"/>
        <end position="125"/>
    </location>
</feature>
<feature type="transmembrane region" description="Helical" evidence="1">
    <location>
        <begin position="130"/>
        <end position="150"/>
    </location>
</feature>
<feature type="transmembrane region" description="Helical" evidence="1">
    <location>
        <begin position="165"/>
        <end position="185"/>
    </location>
</feature>
<feature type="transmembrane region" description="Helical" evidence="1">
    <location>
        <begin position="188"/>
        <end position="208"/>
    </location>
</feature>
<feature type="transmembrane region" description="Helical" evidence="1">
    <location>
        <begin position="222"/>
        <end position="242"/>
    </location>
</feature>
<feature type="splice variant" id="VSP_059078" description="In isoform 2.">
    <original>KV</original>
    <variation>MT</variation>
    <location>
        <begin position="129"/>
        <end position="130"/>
    </location>
</feature>
<feature type="splice variant" id="VSP_059079" description="In isoform 2.">
    <location>
        <begin position="131"/>
        <end position="248"/>
    </location>
</feature>
<name>LFG3_ARATH</name>
<dbReference type="EMBL" id="AC002330">
    <property type="protein sequence ID" value="AAC78271.1"/>
    <property type="molecule type" value="Genomic_DNA"/>
</dbReference>
<dbReference type="EMBL" id="AL161495">
    <property type="protein sequence ID" value="CAB77754.1"/>
    <property type="molecule type" value="Genomic_DNA"/>
</dbReference>
<dbReference type="EMBL" id="CP002687">
    <property type="protein sequence ID" value="AEE82214.1"/>
    <property type="molecule type" value="Genomic_DNA"/>
</dbReference>
<dbReference type="EMBL" id="AY735633">
    <property type="protein sequence ID" value="AAU44503.1"/>
    <property type="molecule type" value="mRNA"/>
</dbReference>
<dbReference type="EMBL" id="AY735634">
    <property type="protein sequence ID" value="AAU44504.1"/>
    <property type="molecule type" value="mRNA"/>
</dbReference>
<dbReference type="EMBL" id="AY924811">
    <property type="protein sequence ID" value="AAX23886.1"/>
    <property type="molecule type" value="mRNA"/>
</dbReference>
<dbReference type="PIR" id="T01080">
    <property type="entry name" value="T01080"/>
</dbReference>
<dbReference type="RefSeq" id="NP_192178.1">
    <molecule id="Q9ZQX7-1"/>
    <property type="nucleotide sequence ID" value="NM_116503.2"/>
</dbReference>
<dbReference type="SMR" id="Q9ZQX7"/>
<dbReference type="FunCoup" id="Q9ZQX7">
    <property type="interactions" value="3095"/>
</dbReference>
<dbReference type="STRING" id="3702.Q9ZQX7"/>
<dbReference type="PaxDb" id="3702-AT4G02690.1"/>
<dbReference type="EnsemblPlants" id="AT4G02690.1">
    <molecule id="Q9ZQX7-1"/>
    <property type="protein sequence ID" value="AT4G02690.1"/>
    <property type="gene ID" value="AT4G02690"/>
</dbReference>
<dbReference type="GeneID" id="828203"/>
<dbReference type="Gramene" id="AT4G02690.1">
    <molecule id="Q9ZQX7-1"/>
    <property type="protein sequence ID" value="AT4G02690.1"/>
    <property type="gene ID" value="AT4G02690"/>
</dbReference>
<dbReference type="KEGG" id="ath:AT4G02690"/>
<dbReference type="Araport" id="AT4G02690"/>
<dbReference type="TAIR" id="AT4G02690">
    <property type="gene designation" value="LFG3"/>
</dbReference>
<dbReference type="eggNOG" id="KOG2322">
    <property type="taxonomic scope" value="Eukaryota"/>
</dbReference>
<dbReference type="HOGENOM" id="CLU_058671_0_1_1"/>
<dbReference type="InParanoid" id="Q9ZQX7"/>
<dbReference type="OMA" id="NQWESTS"/>
<dbReference type="OrthoDB" id="7933078at2759"/>
<dbReference type="PhylomeDB" id="Q9ZQX7"/>
<dbReference type="PRO" id="PR:Q9ZQX7"/>
<dbReference type="Proteomes" id="UP000006548">
    <property type="component" value="Chromosome 4"/>
</dbReference>
<dbReference type="ExpressionAtlas" id="Q9ZQX7">
    <property type="expression patterns" value="baseline and differential"/>
</dbReference>
<dbReference type="GO" id="GO:0016020">
    <property type="term" value="C:membrane"/>
    <property type="evidence" value="ECO:0007669"/>
    <property type="project" value="UniProtKB-SubCell"/>
</dbReference>
<dbReference type="GO" id="GO:0034620">
    <property type="term" value="P:cellular response to unfolded protein"/>
    <property type="evidence" value="ECO:0000315"/>
    <property type="project" value="TAIR"/>
</dbReference>
<dbReference type="InterPro" id="IPR006214">
    <property type="entry name" value="Bax_inhibitor_1-related"/>
</dbReference>
<dbReference type="PANTHER" id="PTHR23291">
    <property type="entry name" value="BAX INHIBITOR-RELATED"/>
    <property type="match status" value="1"/>
</dbReference>
<dbReference type="PANTHER" id="PTHR23291:SF103">
    <property type="entry name" value="PROTEIN LIFEGUARD 3"/>
    <property type="match status" value="1"/>
</dbReference>
<dbReference type="Pfam" id="PF01027">
    <property type="entry name" value="Bax1-I"/>
    <property type="match status" value="1"/>
</dbReference>